<comment type="function">
    <text>Involved in the export process of the bacteriocin pediocin PA-1/AcH. Is also essential for pediocin production.</text>
</comment>
<comment type="subcellular location">
    <subcellularLocation>
        <location>Cell membrane</location>
        <topology>Multi-pass membrane protein</topology>
    </subcellularLocation>
</comment>
<comment type="similarity">
    <text evidence="4">Belongs to the ABC transporter superfamily. Pediocin PA-1 exporter (TC 3.A.1.112.2) family.</text>
</comment>
<sequence>MWTQKWHKYYTAQVDENDCGLAALNMILKYYGSDYMLAHLRQLAKTTADGTTVLGLVKAAKHLNLNAEAVRADMDALTASQLPLPVIVHVFKKNKLPHYYVVYQVTENDLIIGDPDPTVKTTKISKSQFAKEWTQIAIIIAPTVKYKPIKESRHTLIDLVPLLIKQKRLIGLIITAAAITTLISIAGAYFFQLIIDTYLPHLMTNRLSLVAIGLIVAYAFQAIINYIQSFFTIVLGQRLMIDIVLKYVHHLFDLPMNFFTTRHVGEMTSRFSDASKIIDALGSTTLTLFLDMWILLAVGLFLAYQNINLFLCSLVVVPIYISIVWLFKKTFNRLNQDTMESNAVLNSAIIESLSGIETIKSLTGEATTKKKIDTLFSDLLHKNLAYQKADQGQQAIKAATKLILTIVILWWGTFFVMRHQLSLGQLLTYNALLAYFLTPLENIINLQPKLQAARVANNRLNEVYLVESEFSKSREITALEQLNGDIEVNHVSFNYGYCSNILEDVSLTIPHHQKITIVGMSGSGKTTLAKLLVGFFEPQEQHGEIQINHHNISDISRTILRQYINYVPQEPFIFSGSVLENLLLGSRPGVTQQMIDQACSFAEIKTDIENLPQGYHTRLSESGFNLSGGQKQRLSIARALLSPAQCFIFDESTSNLDTITEHKIVSKLLFMKDKTIIFVAHRLNIASQTDKVVVLDHGKIVEQGSHRQLLNYNGYYARLIHNQE</sequence>
<feature type="chain" id="PRO_0000092682" description="Pediocin PA-1 transport/processing ATP-binding protein PedD">
    <location>
        <begin position="1"/>
        <end position="724"/>
    </location>
</feature>
<feature type="transmembrane region" description="Helical" evidence="3">
    <location>
        <begin position="170"/>
        <end position="190"/>
    </location>
</feature>
<feature type="transmembrane region" description="Helical" evidence="3">
    <location>
        <begin position="207"/>
        <end position="227"/>
    </location>
</feature>
<feature type="transmembrane region" description="Helical" evidence="3">
    <location>
        <begin position="284"/>
        <end position="304"/>
    </location>
</feature>
<feature type="transmembrane region" description="Helical" evidence="3">
    <location>
        <begin position="307"/>
        <end position="327"/>
    </location>
</feature>
<feature type="transmembrane region" description="Helical" evidence="3">
    <location>
        <begin position="396"/>
        <end position="416"/>
    </location>
</feature>
<feature type="transmembrane region" description="Helical" evidence="3">
    <location>
        <begin position="426"/>
        <end position="446"/>
    </location>
</feature>
<feature type="domain" description="Peptidase C39" evidence="1">
    <location>
        <begin position="13"/>
        <end position="140"/>
    </location>
</feature>
<feature type="domain" description="ABC transmembrane type-1" evidence="3">
    <location>
        <begin position="170"/>
        <end position="452"/>
    </location>
</feature>
<feature type="domain" description="ABC transporter" evidence="1 2">
    <location>
        <begin position="486"/>
        <end position="722"/>
    </location>
</feature>
<feature type="active site" evidence="1">
    <location>
        <position position="19"/>
    </location>
</feature>
<feature type="binding site" evidence="1 2">
    <location>
        <begin position="519"/>
        <end position="526"/>
    </location>
    <ligand>
        <name>ATP</name>
        <dbReference type="ChEBI" id="CHEBI:30616"/>
    </ligand>
</feature>
<gene>
    <name type="primary">pedD</name>
    <name type="synonym">papD</name>
</gene>
<proteinExistence type="inferred from homology"/>
<accession>P36497</accession>
<geneLocation type="plasmid">
    <name>pSRQ11</name>
</geneLocation>
<geneLocation type="plasmid">
    <name>pSMB74</name>
</geneLocation>
<evidence type="ECO:0000255" key="1">
    <source>
        <dbReference type="PROSITE-ProRule" id="PRU00362"/>
    </source>
</evidence>
<evidence type="ECO:0000255" key="2">
    <source>
        <dbReference type="PROSITE-ProRule" id="PRU00434"/>
    </source>
</evidence>
<evidence type="ECO:0000255" key="3">
    <source>
        <dbReference type="PROSITE-ProRule" id="PRU00441"/>
    </source>
</evidence>
<evidence type="ECO:0000305" key="4"/>
<dbReference type="EC" id="3.4.22.-"/>
<dbReference type="EC" id="7.-.-.-"/>
<dbReference type="EMBL" id="M83924">
    <property type="protein sequence ID" value="AAA25561.1"/>
    <property type="molecule type" value="Genomic_DNA"/>
</dbReference>
<dbReference type="EMBL" id="U02482">
    <property type="protein sequence ID" value="AAC43296.1"/>
    <property type="molecule type" value="Genomic_DNA"/>
</dbReference>
<dbReference type="PIR" id="D48941">
    <property type="entry name" value="D48941"/>
</dbReference>
<dbReference type="RefSeq" id="NP_857605.1">
    <property type="nucleotide sequence ID" value="NC_004832.1"/>
</dbReference>
<dbReference type="RefSeq" id="WP_002834569.1">
    <property type="nucleotide sequence ID" value="NZ_VCYC01000012.1"/>
</dbReference>
<dbReference type="SMR" id="P36497"/>
<dbReference type="MEROPS" id="C39.001"/>
<dbReference type="TCDB" id="3.A.1.112.2">
    <property type="family name" value="the atp-binding cassette (abc) superfamily"/>
</dbReference>
<dbReference type="GO" id="GO:0005886">
    <property type="term" value="C:plasma membrane"/>
    <property type="evidence" value="ECO:0007669"/>
    <property type="project" value="UniProtKB-SubCell"/>
</dbReference>
<dbReference type="GO" id="GO:0043214">
    <property type="term" value="F:ABC-type bacteriocin transporter activity"/>
    <property type="evidence" value="ECO:0007669"/>
    <property type="project" value="InterPro"/>
</dbReference>
<dbReference type="GO" id="GO:0015421">
    <property type="term" value="F:ABC-type oligopeptide transporter activity"/>
    <property type="evidence" value="ECO:0007669"/>
    <property type="project" value="TreeGrafter"/>
</dbReference>
<dbReference type="GO" id="GO:0005524">
    <property type="term" value="F:ATP binding"/>
    <property type="evidence" value="ECO:0007669"/>
    <property type="project" value="UniProtKB-KW"/>
</dbReference>
<dbReference type="GO" id="GO:0016887">
    <property type="term" value="F:ATP hydrolysis activity"/>
    <property type="evidence" value="ECO:0007669"/>
    <property type="project" value="InterPro"/>
</dbReference>
<dbReference type="GO" id="GO:0008234">
    <property type="term" value="F:cysteine-type peptidase activity"/>
    <property type="evidence" value="ECO:0007669"/>
    <property type="project" value="UniProtKB-KW"/>
</dbReference>
<dbReference type="GO" id="GO:0015031">
    <property type="term" value="P:protein transport"/>
    <property type="evidence" value="ECO:0007669"/>
    <property type="project" value="UniProtKB-KW"/>
</dbReference>
<dbReference type="GO" id="GO:0006508">
    <property type="term" value="P:proteolysis"/>
    <property type="evidence" value="ECO:0007669"/>
    <property type="project" value="UniProtKB-KW"/>
</dbReference>
<dbReference type="CDD" id="cd18570">
    <property type="entry name" value="ABC_6TM_PCAT1_LagD_like"/>
    <property type="match status" value="1"/>
</dbReference>
<dbReference type="CDD" id="cd02418">
    <property type="entry name" value="Peptidase_C39B"/>
    <property type="match status" value="1"/>
</dbReference>
<dbReference type="FunFam" id="3.40.50.300:FF:000221">
    <property type="entry name" value="Multidrug ABC transporter ATP-binding protein"/>
    <property type="match status" value="1"/>
</dbReference>
<dbReference type="Gene3D" id="1.20.1560.10">
    <property type="entry name" value="ABC transporter type 1, transmembrane domain"/>
    <property type="match status" value="1"/>
</dbReference>
<dbReference type="Gene3D" id="3.90.70.10">
    <property type="entry name" value="Cysteine proteinases"/>
    <property type="match status" value="1"/>
</dbReference>
<dbReference type="Gene3D" id="3.40.50.300">
    <property type="entry name" value="P-loop containing nucleotide triphosphate hydrolases"/>
    <property type="match status" value="1"/>
</dbReference>
<dbReference type="InterPro" id="IPR003593">
    <property type="entry name" value="AAA+_ATPase"/>
</dbReference>
<dbReference type="InterPro" id="IPR011527">
    <property type="entry name" value="ABC1_TM_dom"/>
</dbReference>
<dbReference type="InterPro" id="IPR036640">
    <property type="entry name" value="ABC1_TM_sf"/>
</dbReference>
<dbReference type="InterPro" id="IPR003439">
    <property type="entry name" value="ABC_transporter-like_ATP-bd"/>
</dbReference>
<dbReference type="InterPro" id="IPR017871">
    <property type="entry name" value="ABC_transporter-like_CS"/>
</dbReference>
<dbReference type="InterPro" id="IPR027417">
    <property type="entry name" value="P-loop_NTPase"/>
</dbReference>
<dbReference type="InterPro" id="IPR005897">
    <property type="entry name" value="Pept_C39_ABC_bacteriocin"/>
</dbReference>
<dbReference type="InterPro" id="IPR005074">
    <property type="entry name" value="Peptidase_C39"/>
</dbReference>
<dbReference type="InterPro" id="IPR039421">
    <property type="entry name" value="Type_1_exporter"/>
</dbReference>
<dbReference type="NCBIfam" id="TIGR01193">
    <property type="entry name" value="bacteriocin_ABC"/>
    <property type="match status" value="1"/>
</dbReference>
<dbReference type="PANTHER" id="PTHR43394:SF1">
    <property type="entry name" value="ATP-BINDING CASSETTE SUB-FAMILY B MEMBER 10, MITOCHONDRIAL"/>
    <property type="match status" value="1"/>
</dbReference>
<dbReference type="PANTHER" id="PTHR43394">
    <property type="entry name" value="ATP-DEPENDENT PERMEASE MDL1, MITOCHONDRIAL"/>
    <property type="match status" value="1"/>
</dbReference>
<dbReference type="Pfam" id="PF00664">
    <property type="entry name" value="ABC_membrane"/>
    <property type="match status" value="1"/>
</dbReference>
<dbReference type="Pfam" id="PF00005">
    <property type="entry name" value="ABC_tran"/>
    <property type="match status" value="1"/>
</dbReference>
<dbReference type="Pfam" id="PF03412">
    <property type="entry name" value="Peptidase_C39"/>
    <property type="match status" value="1"/>
</dbReference>
<dbReference type="SMART" id="SM00382">
    <property type="entry name" value="AAA"/>
    <property type="match status" value="1"/>
</dbReference>
<dbReference type="SUPFAM" id="SSF90123">
    <property type="entry name" value="ABC transporter transmembrane region"/>
    <property type="match status" value="1"/>
</dbReference>
<dbReference type="SUPFAM" id="SSF52540">
    <property type="entry name" value="P-loop containing nucleoside triphosphate hydrolases"/>
    <property type="match status" value="1"/>
</dbReference>
<dbReference type="PROSITE" id="PS50929">
    <property type="entry name" value="ABC_TM1F"/>
    <property type="match status" value="1"/>
</dbReference>
<dbReference type="PROSITE" id="PS00211">
    <property type="entry name" value="ABC_TRANSPORTER_1"/>
    <property type="match status" value="1"/>
</dbReference>
<dbReference type="PROSITE" id="PS50893">
    <property type="entry name" value="ABC_TRANSPORTER_2"/>
    <property type="match status" value="1"/>
</dbReference>
<dbReference type="PROSITE" id="PS50990">
    <property type="entry name" value="PEPTIDASE_C39"/>
    <property type="match status" value="1"/>
</dbReference>
<protein>
    <recommendedName>
        <fullName>Pediocin PA-1 transport/processing ATP-binding protein PedD</fullName>
        <ecNumber>3.4.22.-</ecNumber>
        <ecNumber>7.-.-.-</ecNumber>
    </recommendedName>
    <alternativeName>
        <fullName>Pediocin AcH transport ATP-binding protein PapD</fullName>
    </alternativeName>
</protein>
<reference key="1">
    <citation type="journal article" date="1992" name="Appl. Environ. Microbiol.">
        <title>Cloning, expression, and nucleotide sequence of genes involved in production of pediocin PA-1, and bacteriocin from Pediococcus acidilactici PAC1.0.</title>
        <authorList>
            <person name="Marugg J.D."/>
            <person name="Gonzalez C.F."/>
            <person name="Kunka B.S."/>
            <person name="Ledeboer A.M."/>
            <person name="Pucci M.J."/>
            <person name="Toonen M.Y."/>
            <person name="Walker S.A."/>
            <person name="Zoetmulder L.C.M."/>
            <person name="Vandenbergh P.A."/>
        </authorList>
    </citation>
    <scope>NUCLEOTIDE SEQUENCE [GENOMIC DNA]</scope>
    <source>
        <strain>PAC-1.0</strain>
        <plasmid>pSRQ11</plasmid>
    </source>
</reference>
<reference key="2">
    <citation type="journal article" date="1994" name="Lett. Appl. Microbiol.">
        <title>Complete nucleotide sequence of pSMB 74, a plasmid encoding the production of pediocin AcH in Pediococcus acidilactici.</title>
        <authorList>
            <person name="Motlagh A.M."/>
            <person name="Bukhtiyarova M.B."/>
            <person name="Ray B.R."/>
        </authorList>
    </citation>
    <scope>NUCLEOTIDE SEQUENCE [GENOMIC DNA]</scope>
    <source>
        <strain>H</strain>
        <plasmid>pSMB74</plasmid>
    </source>
</reference>
<keyword id="KW-0067">ATP-binding</keyword>
<keyword id="KW-0080">Bacteriocin transport</keyword>
<keyword id="KW-1003">Cell membrane</keyword>
<keyword id="KW-0378">Hydrolase</keyword>
<keyword id="KW-0472">Membrane</keyword>
<keyword id="KW-0547">Nucleotide-binding</keyword>
<keyword id="KW-0614">Plasmid</keyword>
<keyword id="KW-0645">Protease</keyword>
<keyword id="KW-0653">Protein transport</keyword>
<keyword id="KW-0788">Thiol protease</keyword>
<keyword id="KW-1278">Translocase</keyword>
<keyword id="KW-0812">Transmembrane</keyword>
<keyword id="KW-1133">Transmembrane helix</keyword>
<keyword id="KW-0813">Transport</keyword>
<name>PEDD_PEDAC</name>
<organism>
    <name type="scientific">Pediococcus acidilactici</name>
    <dbReference type="NCBI Taxonomy" id="1254"/>
    <lineage>
        <taxon>Bacteria</taxon>
        <taxon>Bacillati</taxon>
        <taxon>Bacillota</taxon>
        <taxon>Bacilli</taxon>
        <taxon>Lactobacillales</taxon>
        <taxon>Lactobacillaceae</taxon>
        <taxon>Pediococcus</taxon>
        <taxon>Pediococcus acidilactici group</taxon>
    </lineage>
</organism>